<comment type="function">
    <text evidence="1">Catalyzes the prenylation of para-hydroxybenzoate (PHB) with an all-trans polyprenyl group. Mediates the second step in the final reaction sequence of ubiquinone-8 (UQ-8) biosynthesis, which is the condensation of the polyisoprenoid side chain with PHB, generating the first membrane-bound Q intermediate 3-octaprenyl-4-hydroxybenzoate.</text>
</comment>
<comment type="catalytic activity">
    <reaction evidence="1">
        <text>all-trans-octaprenyl diphosphate + 4-hydroxybenzoate = 4-hydroxy-3-(all-trans-octaprenyl)benzoate + diphosphate</text>
        <dbReference type="Rhea" id="RHEA:27782"/>
        <dbReference type="ChEBI" id="CHEBI:1617"/>
        <dbReference type="ChEBI" id="CHEBI:17879"/>
        <dbReference type="ChEBI" id="CHEBI:33019"/>
        <dbReference type="ChEBI" id="CHEBI:57711"/>
        <dbReference type="EC" id="2.5.1.39"/>
    </reaction>
</comment>
<comment type="cofactor">
    <cofactor evidence="1">
        <name>Mg(2+)</name>
        <dbReference type="ChEBI" id="CHEBI:18420"/>
    </cofactor>
</comment>
<comment type="pathway">
    <text evidence="1">Cofactor biosynthesis; ubiquinone biosynthesis.</text>
</comment>
<comment type="subcellular location">
    <subcellularLocation>
        <location evidence="1">Cell inner membrane</location>
        <topology evidence="1">Multi-pass membrane protein</topology>
    </subcellularLocation>
</comment>
<comment type="similarity">
    <text evidence="1">Belongs to the UbiA prenyltransferase family.</text>
</comment>
<name>UBIA_FRAT1</name>
<protein>
    <recommendedName>
        <fullName evidence="1">4-hydroxybenzoate octaprenyltransferase</fullName>
        <ecNumber evidence="1">2.5.1.39</ecNumber>
    </recommendedName>
    <alternativeName>
        <fullName evidence="1">4-HB polyprenyltransferase</fullName>
    </alternativeName>
</protein>
<accession>Q14HY6</accession>
<proteinExistence type="inferred from homology"/>
<reference key="1">
    <citation type="journal article" date="2007" name="PLoS ONE">
        <title>Genome sequencing shows that European isolates of Francisella tularensis subspecies tularensis are almost identical to US laboratory strain Schu S4.</title>
        <authorList>
            <person name="Chaudhuri R.R."/>
            <person name="Ren C.-P."/>
            <person name="Desmond L."/>
            <person name="Vincent G.A."/>
            <person name="Silman N.J."/>
            <person name="Brehm J.K."/>
            <person name="Elmore M.J."/>
            <person name="Hudson M.J."/>
            <person name="Forsman M."/>
            <person name="Isherwood K.E."/>
            <person name="Gurycova D."/>
            <person name="Minton N.P."/>
            <person name="Titball R.W."/>
            <person name="Pallen M.J."/>
            <person name="Vipond R."/>
        </authorList>
    </citation>
    <scope>NUCLEOTIDE SEQUENCE [LARGE SCALE GENOMIC DNA]</scope>
    <source>
        <strain>FSC 198</strain>
    </source>
</reference>
<dbReference type="EC" id="2.5.1.39" evidence="1"/>
<dbReference type="EMBL" id="AM286280">
    <property type="protein sequence ID" value="CAL08872.1"/>
    <property type="molecule type" value="Genomic_DNA"/>
</dbReference>
<dbReference type="RefSeq" id="WP_003020835.1">
    <property type="nucleotide sequence ID" value="NC_008245.1"/>
</dbReference>
<dbReference type="SMR" id="Q14HY6"/>
<dbReference type="KEGG" id="ftf:FTF0856c"/>
<dbReference type="HOGENOM" id="CLU_034879_1_0_6"/>
<dbReference type="UniPathway" id="UPA00232"/>
<dbReference type="GO" id="GO:0005886">
    <property type="term" value="C:plasma membrane"/>
    <property type="evidence" value="ECO:0007669"/>
    <property type="project" value="UniProtKB-SubCell"/>
</dbReference>
<dbReference type="GO" id="GO:0008412">
    <property type="term" value="F:4-hydroxybenzoate polyprenyltransferase activity"/>
    <property type="evidence" value="ECO:0007669"/>
    <property type="project" value="UniProtKB-UniRule"/>
</dbReference>
<dbReference type="GO" id="GO:0006744">
    <property type="term" value="P:ubiquinone biosynthetic process"/>
    <property type="evidence" value="ECO:0007669"/>
    <property type="project" value="UniProtKB-UniRule"/>
</dbReference>
<dbReference type="CDD" id="cd13959">
    <property type="entry name" value="PT_UbiA_COQ2"/>
    <property type="match status" value="1"/>
</dbReference>
<dbReference type="FunFam" id="1.10.357.140:FF:000008">
    <property type="entry name" value="4-hydroxybenzoate octaprenyltransferase"/>
    <property type="match status" value="1"/>
</dbReference>
<dbReference type="FunFam" id="1.20.120.1780:FF:000001">
    <property type="entry name" value="4-hydroxybenzoate octaprenyltransferase"/>
    <property type="match status" value="1"/>
</dbReference>
<dbReference type="Gene3D" id="1.10.357.140">
    <property type="entry name" value="UbiA prenyltransferase"/>
    <property type="match status" value="1"/>
</dbReference>
<dbReference type="Gene3D" id="1.20.120.1780">
    <property type="entry name" value="UbiA prenyltransferase"/>
    <property type="match status" value="1"/>
</dbReference>
<dbReference type="HAMAP" id="MF_01635">
    <property type="entry name" value="UbiA"/>
    <property type="match status" value="1"/>
</dbReference>
<dbReference type="InterPro" id="IPR006370">
    <property type="entry name" value="HB_polyprenyltransferase-like"/>
</dbReference>
<dbReference type="InterPro" id="IPR039653">
    <property type="entry name" value="Prenyltransferase"/>
</dbReference>
<dbReference type="InterPro" id="IPR000537">
    <property type="entry name" value="UbiA_prenyltransferase"/>
</dbReference>
<dbReference type="InterPro" id="IPR030470">
    <property type="entry name" value="UbiA_prenylTrfase_CS"/>
</dbReference>
<dbReference type="InterPro" id="IPR044878">
    <property type="entry name" value="UbiA_sf"/>
</dbReference>
<dbReference type="NCBIfam" id="TIGR01474">
    <property type="entry name" value="ubiA_proteo"/>
    <property type="match status" value="1"/>
</dbReference>
<dbReference type="PANTHER" id="PTHR11048:SF28">
    <property type="entry name" value="4-HYDROXYBENZOATE POLYPRENYLTRANSFERASE, MITOCHONDRIAL"/>
    <property type="match status" value="1"/>
</dbReference>
<dbReference type="PANTHER" id="PTHR11048">
    <property type="entry name" value="PRENYLTRANSFERASES"/>
    <property type="match status" value="1"/>
</dbReference>
<dbReference type="Pfam" id="PF01040">
    <property type="entry name" value="UbiA"/>
    <property type="match status" value="1"/>
</dbReference>
<dbReference type="PROSITE" id="PS00943">
    <property type="entry name" value="UBIA"/>
    <property type="match status" value="1"/>
</dbReference>
<keyword id="KW-0997">Cell inner membrane</keyword>
<keyword id="KW-1003">Cell membrane</keyword>
<keyword id="KW-0460">Magnesium</keyword>
<keyword id="KW-0472">Membrane</keyword>
<keyword id="KW-0808">Transferase</keyword>
<keyword id="KW-0812">Transmembrane</keyword>
<keyword id="KW-1133">Transmembrane helix</keyword>
<keyword id="KW-0831">Ubiquinone biosynthesis</keyword>
<gene>
    <name evidence="1" type="primary">ubiA</name>
    <name type="ordered locus">FTF0856c</name>
</gene>
<sequence length="284" mass="32489">MNKQQLKAYFMLMRLHRPIPILLILWPTLTALVLASHGLPDISYLVIFTIGVVVMRTVGCIINDIADVDFDKHVARTNTRPLTSGQLSIKNAIWLCISLTLVAFICVLFLNLYTILLSFVALFLAILYPFCKRFFAIPQLILGLAFNFGIFMAFSTIQNQIPVEAWIFYIATICWTIAYDTIYALADREFDLEIGIKSSAVLFGNKVFRYILLFNFLSLLLLIILGIYCDFNSFFYLGVVICSLFFVRNYFLYKKLGITNCINAFSANHWIGLIIFIIAVIQYI</sequence>
<feature type="chain" id="PRO_0000262798" description="4-hydroxybenzoate octaprenyltransferase">
    <location>
        <begin position="1"/>
        <end position="284"/>
    </location>
</feature>
<feature type="transmembrane region" description="Helical" evidence="1">
    <location>
        <begin position="19"/>
        <end position="39"/>
    </location>
</feature>
<feature type="transmembrane region" description="Helical" evidence="1">
    <location>
        <begin position="42"/>
        <end position="62"/>
    </location>
</feature>
<feature type="transmembrane region" description="Helical" evidence="1">
    <location>
        <begin position="85"/>
        <end position="105"/>
    </location>
</feature>
<feature type="transmembrane region" description="Helical" evidence="1">
    <location>
        <begin position="107"/>
        <end position="127"/>
    </location>
</feature>
<feature type="transmembrane region" description="Helical" evidence="1">
    <location>
        <begin position="134"/>
        <end position="154"/>
    </location>
</feature>
<feature type="transmembrane region" description="Helical" evidence="1">
    <location>
        <begin position="165"/>
        <end position="185"/>
    </location>
</feature>
<feature type="transmembrane region" description="Helical" evidence="1">
    <location>
        <begin position="211"/>
        <end position="231"/>
    </location>
</feature>
<feature type="transmembrane region" description="Helical" evidence="1">
    <location>
        <begin position="233"/>
        <end position="253"/>
    </location>
</feature>
<feature type="transmembrane region" description="Helical" evidence="1">
    <location>
        <begin position="261"/>
        <end position="281"/>
    </location>
</feature>
<evidence type="ECO:0000255" key="1">
    <source>
        <dbReference type="HAMAP-Rule" id="MF_01635"/>
    </source>
</evidence>
<organism>
    <name type="scientific">Francisella tularensis subsp. tularensis (strain FSC 198)</name>
    <dbReference type="NCBI Taxonomy" id="393115"/>
    <lineage>
        <taxon>Bacteria</taxon>
        <taxon>Pseudomonadati</taxon>
        <taxon>Pseudomonadota</taxon>
        <taxon>Gammaproteobacteria</taxon>
        <taxon>Thiotrichales</taxon>
        <taxon>Francisellaceae</taxon>
        <taxon>Francisella</taxon>
    </lineage>
</organism>